<accession>P61493</accession>
<accession>P45747</accession>
<accession>Q5SLM1</accession>
<accession>Q60017</accession>
<name>CH10_THET8</name>
<organism>
    <name type="scientific">Thermus thermophilus (strain ATCC 27634 / DSM 579 / HB8)</name>
    <dbReference type="NCBI Taxonomy" id="300852"/>
    <lineage>
        <taxon>Bacteria</taxon>
        <taxon>Thermotogati</taxon>
        <taxon>Deinococcota</taxon>
        <taxon>Deinococci</taxon>
        <taxon>Thermales</taxon>
        <taxon>Thermaceae</taxon>
        <taxon>Thermus</taxon>
    </lineage>
</organism>
<keyword id="KW-0002">3D-structure</keyword>
<keyword id="KW-0143">Chaperone</keyword>
<keyword id="KW-0963">Cytoplasm</keyword>
<keyword id="KW-0903">Direct protein sequencing</keyword>
<keyword id="KW-1185">Reference proteome</keyword>
<evidence type="ECO:0000255" key="1">
    <source>
        <dbReference type="HAMAP-Rule" id="MF_00580"/>
    </source>
</evidence>
<evidence type="ECO:0000269" key="2">
    <source>
    </source>
</evidence>
<evidence type="ECO:0000305" key="3"/>
<evidence type="ECO:0007829" key="4">
    <source>
        <dbReference type="PDB" id="1WNR"/>
    </source>
</evidence>
<feature type="initiator methionine" description="Removed" evidence="2">
    <location>
        <position position="1"/>
    </location>
</feature>
<feature type="chain" id="PRO_0000174886" description="Co-chaperonin GroES">
    <location>
        <begin position="2"/>
        <end position="101"/>
    </location>
</feature>
<feature type="sequence conflict" description="In Ref. 4; AA sequence." evidence="3" ref="4">
    <original>R</original>
    <variation>K</variation>
    <location>
        <position position="20"/>
    </location>
</feature>
<feature type="sequence conflict" description="In Ref. 2; AAA83440." evidence="3" ref="2">
    <original>DGEE</original>
    <variation>APRRT</variation>
    <location>
        <begin position="84"/>
        <end position="87"/>
    </location>
</feature>
<feature type="strand" evidence="4">
    <location>
        <begin position="9"/>
        <end position="11"/>
    </location>
</feature>
<feature type="strand" evidence="4">
    <location>
        <begin position="13"/>
        <end position="20"/>
    </location>
</feature>
<feature type="strand" evidence="4">
    <location>
        <begin position="28"/>
        <end position="30"/>
    </location>
</feature>
<feature type="helix" evidence="4">
    <location>
        <begin position="35"/>
        <end position="38"/>
    </location>
</feature>
<feature type="strand" evidence="4">
    <location>
        <begin position="42"/>
        <end position="49"/>
    </location>
</feature>
<feature type="strand" evidence="4">
    <location>
        <begin position="70"/>
        <end position="73"/>
    </location>
</feature>
<feature type="strand" evidence="4">
    <location>
        <begin position="78"/>
        <end position="83"/>
    </location>
</feature>
<feature type="strand" evidence="4">
    <location>
        <begin position="86"/>
        <end position="92"/>
    </location>
</feature>
<feature type="helix" evidence="4">
    <location>
        <begin position="93"/>
        <end position="95"/>
    </location>
</feature>
<feature type="strand" evidence="4">
    <location>
        <begin position="96"/>
        <end position="100"/>
    </location>
</feature>
<sequence>MAAEVKTVIKPLGDRVVVKRIEEEPKTKGGIVLPDTAKEKPQKGKVIAVGTGRVLENGQRVPLEVKEGDIVVFAKYGGTEIEIDGEEYVILSERDLLAVLQ</sequence>
<comment type="function">
    <text evidence="1">Together with the chaperonin GroEL, plays an essential role in assisting protein folding. The GroEL-GroES system forms a nano-cage that allows encapsulation of the non-native substrate proteins and provides a physical environment optimized to promote and accelerate protein folding. GroES binds to the apical surface of the GroEL ring, thereby capping the opening of the GroEL channel.</text>
</comment>
<comment type="subunit">
    <text evidence="1">Heptamer of 7 subunits arranged in a ring. Interacts with the chaperonin GroEL.</text>
</comment>
<comment type="interaction">
    <interactant intactId="EBI-15757522">
        <id>P61493</id>
    </interactant>
    <interactant intactId="EBI-15757498">
        <id>Q5SLM2</id>
        <label>groEL</label>
    </interactant>
    <organismsDiffer>false</organismsDiffer>
    <experiments>2</experiments>
</comment>
<comment type="subcellular location">
    <subcellularLocation>
        <location evidence="1">Cytoplasm</location>
    </subcellularLocation>
</comment>
<comment type="similarity">
    <text evidence="1 3">Belongs to the GroES chaperonin family.</text>
</comment>
<dbReference type="EMBL" id="D45880">
    <property type="protein sequence ID" value="BAA08298.1"/>
    <property type="molecule type" value="Genomic_DNA"/>
</dbReference>
<dbReference type="EMBL" id="U29483">
    <property type="protein sequence ID" value="AAA83440.1"/>
    <property type="molecule type" value="Genomic_DNA"/>
</dbReference>
<dbReference type="EMBL" id="AP008226">
    <property type="protein sequence ID" value="BAD70095.1"/>
    <property type="molecule type" value="Genomic_DNA"/>
</dbReference>
<dbReference type="PIR" id="B39313">
    <property type="entry name" value="B39313"/>
</dbReference>
<dbReference type="RefSeq" id="WP_011174076.1">
    <property type="nucleotide sequence ID" value="NC_006461.1"/>
</dbReference>
<dbReference type="RefSeq" id="YP_143538.1">
    <property type="nucleotide sequence ID" value="NC_006461.1"/>
</dbReference>
<dbReference type="PDB" id="1WNR">
    <property type="method" value="X-ray"/>
    <property type="resolution" value="2.90 A"/>
    <property type="chains" value="A/B/C/D/E/F/G=9-101"/>
</dbReference>
<dbReference type="PDBsum" id="1WNR"/>
<dbReference type="SMR" id="P61493"/>
<dbReference type="DIP" id="DIP-48332N"/>
<dbReference type="IntAct" id="P61493">
    <property type="interactions" value="1"/>
</dbReference>
<dbReference type="EnsemblBacteria" id="BAD70095">
    <property type="protein sequence ID" value="BAD70095"/>
    <property type="gene ID" value="BAD70095"/>
</dbReference>
<dbReference type="GeneID" id="3168828"/>
<dbReference type="KEGG" id="ttj:TTHA0272"/>
<dbReference type="PATRIC" id="fig|300852.9.peg.272"/>
<dbReference type="eggNOG" id="COG0234">
    <property type="taxonomic scope" value="Bacteria"/>
</dbReference>
<dbReference type="HOGENOM" id="CLU_132825_2_0_0"/>
<dbReference type="PhylomeDB" id="P61493"/>
<dbReference type="EvolutionaryTrace" id="P61493"/>
<dbReference type="Proteomes" id="UP000000532">
    <property type="component" value="Chromosome"/>
</dbReference>
<dbReference type="GO" id="GO:0005737">
    <property type="term" value="C:cytoplasm"/>
    <property type="evidence" value="ECO:0007669"/>
    <property type="project" value="UniProtKB-SubCell"/>
</dbReference>
<dbReference type="GO" id="GO:0005524">
    <property type="term" value="F:ATP binding"/>
    <property type="evidence" value="ECO:0007669"/>
    <property type="project" value="InterPro"/>
</dbReference>
<dbReference type="GO" id="GO:0046872">
    <property type="term" value="F:metal ion binding"/>
    <property type="evidence" value="ECO:0007669"/>
    <property type="project" value="TreeGrafter"/>
</dbReference>
<dbReference type="GO" id="GO:0044183">
    <property type="term" value="F:protein folding chaperone"/>
    <property type="evidence" value="ECO:0007669"/>
    <property type="project" value="InterPro"/>
</dbReference>
<dbReference type="GO" id="GO:0051087">
    <property type="term" value="F:protein-folding chaperone binding"/>
    <property type="evidence" value="ECO:0007669"/>
    <property type="project" value="TreeGrafter"/>
</dbReference>
<dbReference type="GO" id="GO:0051082">
    <property type="term" value="F:unfolded protein binding"/>
    <property type="evidence" value="ECO:0007669"/>
    <property type="project" value="TreeGrafter"/>
</dbReference>
<dbReference type="GO" id="GO:0051085">
    <property type="term" value="P:chaperone cofactor-dependent protein refolding"/>
    <property type="evidence" value="ECO:0007669"/>
    <property type="project" value="TreeGrafter"/>
</dbReference>
<dbReference type="CDD" id="cd00320">
    <property type="entry name" value="cpn10"/>
    <property type="match status" value="1"/>
</dbReference>
<dbReference type="FunFam" id="2.30.33.40:FF:000001">
    <property type="entry name" value="10 kDa chaperonin"/>
    <property type="match status" value="1"/>
</dbReference>
<dbReference type="Gene3D" id="2.30.33.40">
    <property type="entry name" value="GroES chaperonin"/>
    <property type="match status" value="1"/>
</dbReference>
<dbReference type="HAMAP" id="MF_00580">
    <property type="entry name" value="CH10"/>
    <property type="match status" value="1"/>
</dbReference>
<dbReference type="InterPro" id="IPR020818">
    <property type="entry name" value="Chaperonin_GroES"/>
</dbReference>
<dbReference type="InterPro" id="IPR037124">
    <property type="entry name" value="Chaperonin_GroES_sf"/>
</dbReference>
<dbReference type="InterPro" id="IPR018369">
    <property type="entry name" value="Chaprnonin_Cpn10_CS"/>
</dbReference>
<dbReference type="InterPro" id="IPR011032">
    <property type="entry name" value="GroES-like_sf"/>
</dbReference>
<dbReference type="NCBIfam" id="NF001527">
    <property type="entry name" value="PRK00364.1-2"/>
    <property type="match status" value="1"/>
</dbReference>
<dbReference type="NCBIfam" id="NF001530">
    <property type="entry name" value="PRK00364.1-6"/>
    <property type="match status" value="1"/>
</dbReference>
<dbReference type="NCBIfam" id="NF001531">
    <property type="entry name" value="PRK00364.2-2"/>
    <property type="match status" value="1"/>
</dbReference>
<dbReference type="NCBIfam" id="NF001533">
    <property type="entry name" value="PRK00364.2-4"/>
    <property type="match status" value="1"/>
</dbReference>
<dbReference type="NCBIfam" id="NF001534">
    <property type="entry name" value="PRK00364.2-5"/>
    <property type="match status" value="1"/>
</dbReference>
<dbReference type="PANTHER" id="PTHR10772">
    <property type="entry name" value="10 KDA HEAT SHOCK PROTEIN"/>
    <property type="match status" value="1"/>
</dbReference>
<dbReference type="PANTHER" id="PTHR10772:SF58">
    <property type="entry name" value="CO-CHAPERONIN GROES"/>
    <property type="match status" value="1"/>
</dbReference>
<dbReference type="Pfam" id="PF00166">
    <property type="entry name" value="Cpn10"/>
    <property type="match status" value="1"/>
</dbReference>
<dbReference type="PRINTS" id="PR00297">
    <property type="entry name" value="CHAPERONIN10"/>
</dbReference>
<dbReference type="SMART" id="SM00883">
    <property type="entry name" value="Cpn10"/>
    <property type="match status" value="1"/>
</dbReference>
<dbReference type="SUPFAM" id="SSF50129">
    <property type="entry name" value="GroES-like"/>
    <property type="match status" value="1"/>
</dbReference>
<dbReference type="PROSITE" id="PS00681">
    <property type="entry name" value="CHAPERONINS_CPN10"/>
    <property type="match status" value="1"/>
</dbReference>
<gene>
    <name evidence="1" type="primary">groES</name>
    <name type="synonym">chpS</name>
    <name evidence="1" type="synonym">groS</name>
    <name type="synonym">hsp10</name>
    <name type="ordered locus">TTHA0272</name>
</gene>
<protein>
    <recommendedName>
        <fullName evidence="1">Co-chaperonin GroES</fullName>
    </recommendedName>
    <alternativeName>
        <fullName evidence="1">10 kDa chaperonin</fullName>
    </alternativeName>
    <alternativeName>
        <fullName evidence="1">Chaperonin-10</fullName>
        <shortName evidence="1">Cpn10</shortName>
    </alternativeName>
</protein>
<proteinExistence type="evidence at protein level"/>
<reference key="1">
    <citation type="journal article" date="1995" name="J. Biochem.">
        <title>Molecular cloning, expression, and characterization of chaperonin-60 and chaperonin-10 from a thermophilic bacterium, Thermus thermophilus HB8.</title>
        <authorList>
            <person name="Amada K."/>
            <person name="Yohda M."/>
            <person name="Odaka M."/>
            <person name="Endo I."/>
            <person name="Ishii N."/>
            <person name="Taguchi H."/>
            <person name="Yoshida M."/>
        </authorList>
    </citation>
    <scope>NUCLEOTIDE SEQUENCE [GENOMIC DNA]</scope>
    <source>
        <strain>ATCC 27634 / DSM 579 / HB8</strain>
    </source>
</reference>
<reference key="2">
    <citation type="submission" date="1995-06" db="EMBL/GenBank/DDBJ databases">
        <title>Cloning and characterization of the GroESL operon in Thermus aquaticus HB8.</title>
        <authorList>
            <person name="Erbeznik M."/>
            <person name="Joachimiak A."/>
        </authorList>
    </citation>
    <scope>NUCLEOTIDE SEQUENCE [GENOMIC DNA]</scope>
    <source>
        <strain>ATCC 27634 / DSM 579 / HB8</strain>
    </source>
</reference>
<reference key="3">
    <citation type="submission" date="2004-11" db="EMBL/GenBank/DDBJ databases">
        <title>Complete genome sequence of Thermus thermophilus HB8.</title>
        <authorList>
            <person name="Masui R."/>
            <person name="Kurokawa K."/>
            <person name="Nakagawa N."/>
            <person name="Tokunaga F."/>
            <person name="Koyama Y."/>
            <person name="Shibata T."/>
            <person name="Oshima T."/>
            <person name="Yokoyama S."/>
            <person name="Yasunaga T."/>
            <person name="Kuramitsu S."/>
        </authorList>
    </citation>
    <scope>NUCLEOTIDE SEQUENCE [LARGE SCALE GENOMIC DNA]</scope>
    <source>
        <strain>ATCC 27634 / DSM 579 / HB8</strain>
    </source>
</reference>
<reference key="4">
    <citation type="journal article" date="1991" name="J. Biol. Chem.">
        <title>A chaperonin from a thermophilic bacterium, Thermus thermophilus, that controls refoldings of several thermophilic enzymes.</title>
        <authorList>
            <person name="Taguchi H."/>
            <person name="Konishi J."/>
            <person name="Ishii N."/>
            <person name="Yoshida M."/>
        </authorList>
    </citation>
    <scope>PROTEIN SEQUENCE OF 2-24</scope>
</reference>